<comment type="function">
    <text evidence="3">Catalyzes the rate-limiting step of the oxidative pentose-phosphate pathway, which represents a route for the dissimilation of carbohydrates besides glycolysis. The main function of this enzyme is to provide reducing power (NADPH) and pentose phosphates for fatty acid and nucleic acid synthesis.</text>
</comment>
<comment type="catalytic activity">
    <reaction evidence="3">
        <text>D-glucose 6-phosphate + NADP(+) = 6-phospho-D-glucono-1,5-lactone + NADPH + H(+)</text>
        <dbReference type="Rhea" id="RHEA:15841"/>
        <dbReference type="ChEBI" id="CHEBI:15378"/>
        <dbReference type="ChEBI" id="CHEBI:57783"/>
        <dbReference type="ChEBI" id="CHEBI:57955"/>
        <dbReference type="ChEBI" id="CHEBI:58349"/>
        <dbReference type="ChEBI" id="CHEBI:61548"/>
        <dbReference type="EC" id="1.1.1.49"/>
    </reaction>
    <physiologicalReaction direction="left-to-right" evidence="5">
        <dbReference type="Rhea" id="RHEA:15842"/>
    </physiologicalReaction>
</comment>
<comment type="pathway">
    <text evidence="3">Carbohydrate degradation; pentose phosphate pathway; D-ribulose 5-phosphate from D-glucose 6-phosphate (oxidative stage): step 1/3.</text>
</comment>
<comment type="subunit">
    <text evidence="2 3">Homotetramer; dimer of dimers (PubMed:9169132). Interacts with SIRT2; the interaction is enhanced by H(2)O(2) treatment (By similarity).</text>
</comment>
<comment type="subcellular location">
    <subcellularLocation>
        <location evidence="2">Cytoplasm</location>
        <location evidence="2">Cytosol</location>
    </subcellularLocation>
    <subcellularLocation>
        <location evidence="2">Membrane</location>
        <topology evidence="2">Peripheral membrane protein</topology>
    </subcellularLocation>
</comment>
<comment type="tissue specificity">
    <text evidence="3">Testis.</text>
</comment>
<comment type="PTM">
    <text evidence="2">Acetylated by ELP3; acetylation inhibits its homodimerization and enzyme activity. Deacetylated by SIRT2; deacetylation stimulates its enzyme activity (By similarity).</text>
</comment>
<comment type="miscellaneous">
    <text>Has NADP both as cofactor (bound to the N-terminal domain) and as structural element bound to the C-terminal domain.</text>
</comment>
<comment type="similarity">
    <text evidence="4">Belongs to the glucose-6-phosphate dehydrogenase family.</text>
</comment>
<name>G6PD2_MOUSE</name>
<organism>
    <name type="scientific">Mus musculus</name>
    <name type="common">Mouse</name>
    <dbReference type="NCBI Taxonomy" id="10090"/>
    <lineage>
        <taxon>Eukaryota</taxon>
        <taxon>Metazoa</taxon>
        <taxon>Chordata</taxon>
        <taxon>Craniata</taxon>
        <taxon>Vertebrata</taxon>
        <taxon>Euteleostomi</taxon>
        <taxon>Mammalia</taxon>
        <taxon>Eutheria</taxon>
        <taxon>Euarchontoglires</taxon>
        <taxon>Glires</taxon>
        <taxon>Rodentia</taxon>
        <taxon>Myomorpha</taxon>
        <taxon>Muroidea</taxon>
        <taxon>Muridae</taxon>
        <taxon>Murinae</taxon>
        <taxon>Mus</taxon>
        <taxon>Mus</taxon>
    </lineage>
</organism>
<protein>
    <recommendedName>
        <fullName>Glucose-6-phosphate 1-dehydrogenase 2</fullName>
        <shortName>G6PD</shortName>
        <ecNumber evidence="3">1.1.1.49</ecNumber>
    </recommendedName>
</protein>
<evidence type="ECO:0000250" key="1">
    <source>
        <dbReference type="UniProtKB" id="P11411"/>
    </source>
</evidence>
<evidence type="ECO:0000250" key="2">
    <source>
        <dbReference type="UniProtKB" id="P11413"/>
    </source>
</evidence>
<evidence type="ECO:0000269" key="3">
    <source>
    </source>
</evidence>
<evidence type="ECO:0000305" key="4"/>
<evidence type="ECO:0000305" key="5">
    <source>
    </source>
</evidence>
<dbReference type="EC" id="1.1.1.49" evidence="3"/>
<dbReference type="EMBL" id="Z84471">
    <property type="protein sequence ID" value="CAB06476.1"/>
    <property type="molecule type" value="Genomic_DNA"/>
</dbReference>
<dbReference type="EMBL" id="BC120827">
    <property type="protein sequence ID" value="AAI20828.1"/>
    <property type="molecule type" value="mRNA"/>
</dbReference>
<dbReference type="EMBL" id="BC137684">
    <property type="protein sequence ID" value="AAI37685.1"/>
    <property type="molecule type" value="mRNA"/>
</dbReference>
<dbReference type="CCDS" id="CCDS19297.1"/>
<dbReference type="RefSeq" id="NP_062341.2">
    <property type="nucleotide sequence ID" value="NM_019468.2"/>
</dbReference>
<dbReference type="SMR" id="P97324"/>
<dbReference type="FunCoup" id="P97324">
    <property type="interactions" value="941"/>
</dbReference>
<dbReference type="STRING" id="10090.ENSMUSP00000131163"/>
<dbReference type="GlyGen" id="P97324">
    <property type="glycosylation" value="2 sites, 1 O-linked glycan (1 site)"/>
</dbReference>
<dbReference type="iPTMnet" id="P97324"/>
<dbReference type="PhosphoSitePlus" id="P97324"/>
<dbReference type="SwissPalm" id="P97324"/>
<dbReference type="jPOST" id="P97324"/>
<dbReference type="PaxDb" id="10090-ENSMUSP00000131163"/>
<dbReference type="PeptideAtlas" id="P97324"/>
<dbReference type="ProteomicsDB" id="267551"/>
<dbReference type="DNASU" id="14380"/>
<dbReference type="GeneID" id="14380"/>
<dbReference type="KEGG" id="mmu:14380"/>
<dbReference type="AGR" id="MGI:105977"/>
<dbReference type="CTD" id="14380"/>
<dbReference type="MGI" id="MGI:105977">
    <property type="gene designation" value="G6pd2"/>
</dbReference>
<dbReference type="eggNOG" id="KOG0563">
    <property type="taxonomic scope" value="Eukaryota"/>
</dbReference>
<dbReference type="InParanoid" id="P97324"/>
<dbReference type="OrthoDB" id="60984at2759"/>
<dbReference type="UniPathway" id="UPA00115">
    <property type="reaction ID" value="UER00408"/>
</dbReference>
<dbReference type="BioGRID-ORCS" id="14380">
    <property type="hits" value="5 hits in 78 CRISPR screens"/>
</dbReference>
<dbReference type="PRO" id="PR:P97324"/>
<dbReference type="Proteomes" id="UP000000589">
    <property type="component" value="Unplaced"/>
</dbReference>
<dbReference type="RNAct" id="P97324">
    <property type="molecule type" value="protein"/>
</dbReference>
<dbReference type="GO" id="GO:0005829">
    <property type="term" value="C:cytosol"/>
    <property type="evidence" value="ECO:0007669"/>
    <property type="project" value="UniProtKB-SubCell"/>
</dbReference>
<dbReference type="GO" id="GO:0016020">
    <property type="term" value="C:membrane"/>
    <property type="evidence" value="ECO:0007669"/>
    <property type="project" value="UniProtKB-SubCell"/>
</dbReference>
<dbReference type="GO" id="GO:0004345">
    <property type="term" value="F:glucose-6-phosphate dehydrogenase activity"/>
    <property type="evidence" value="ECO:0000314"/>
    <property type="project" value="MGI"/>
</dbReference>
<dbReference type="GO" id="GO:0050661">
    <property type="term" value="F:NADP binding"/>
    <property type="evidence" value="ECO:0007669"/>
    <property type="project" value="InterPro"/>
</dbReference>
<dbReference type="GO" id="GO:0051156">
    <property type="term" value="P:glucose 6-phosphate metabolic process"/>
    <property type="evidence" value="ECO:0000250"/>
    <property type="project" value="UniProtKB"/>
</dbReference>
<dbReference type="GO" id="GO:0006006">
    <property type="term" value="P:glucose metabolic process"/>
    <property type="evidence" value="ECO:0007669"/>
    <property type="project" value="UniProtKB-KW"/>
</dbReference>
<dbReference type="GO" id="GO:0006739">
    <property type="term" value="P:NADP metabolic process"/>
    <property type="evidence" value="ECO:0000250"/>
    <property type="project" value="UniProtKB"/>
</dbReference>
<dbReference type="GO" id="GO:0006098">
    <property type="term" value="P:pentose-phosphate shunt"/>
    <property type="evidence" value="ECO:0007669"/>
    <property type="project" value="UniProtKB-UniPathway"/>
</dbReference>
<dbReference type="FunFam" id="3.30.360.10:FF:000013">
    <property type="entry name" value="Glucose-6-phosphate 1-dehydrogenase"/>
    <property type="match status" value="1"/>
</dbReference>
<dbReference type="FunFam" id="3.40.50.720:FF:000111">
    <property type="entry name" value="Glucose-6-phosphate 1-dehydrogenase"/>
    <property type="match status" value="1"/>
</dbReference>
<dbReference type="Gene3D" id="3.30.360.10">
    <property type="entry name" value="Dihydrodipicolinate Reductase, domain 2"/>
    <property type="match status" value="1"/>
</dbReference>
<dbReference type="Gene3D" id="3.40.50.720">
    <property type="entry name" value="NAD(P)-binding Rossmann-like Domain"/>
    <property type="match status" value="1"/>
</dbReference>
<dbReference type="HAMAP" id="MF_00966">
    <property type="entry name" value="G6PD"/>
    <property type="match status" value="1"/>
</dbReference>
<dbReference type="InterPro" id="IPR001282">
    <property type="entry name" value="G6P_DH"/>
</dbReference>
<dbReference type="InterPro" id="IPR022675">
    <property type="entry name" value="G6P_DH_C"/>
</dbReference>
<dbReference type="InterPro" id="IPR022674">
    <property type="entry name" value="G6P_DH_NAD-bd"/>
</dbReference>
<dbReference type="InterPro" id="IPR036291">
    <property type="entry name" value="NAD(P)-bd_dom_sf"/>
</dbReference>
<dbReference type="NCBIfam" id="TIGR00871">
    <property type="entry name" value="zwf"/>
    <property type="match status" value="1"/>
</dbReference>
<dbReference type="PANTHER" id="PTHR23429:SF0">
    <property type="entry name" value="GLUCOSE-6-PHOSPHATE 1-DEHYDROGENASE"/>
    <property type="match status" value="1"/>
</dbReference>
<dbReference type="PANTHER" id="PTHR23429">
    <property type="entry name" value="GLUCOSE-6-PHOSPHATE 1-DEHYDROGENASE G6PD"/>
    <property type="match status" value="1"/>
</dbReference>
<dbReference type="Pfam" id="PF02781">
    <property type="entry name" value="G6PD_C"/>
    <property type="match status" value="1"/>
</dbReference>
<dbReference type="Pfam" id="PF00479">
    <property type="entry name" value="G6PD_N"/>
    <property type="match status" value="1"/>
</dbReference>
<dbReference type="PIRSF" id="PIRSF000110">
    <property type="entry name" value="G6PD"/>
    <property type="match status" value="1"/>
</dbReference>
<dbReference type="PRINTS" id="PR00079">
    <property type="entry name" value="G6PDHDRGNASE"/>
</dbReference>
<dbReference type="SUPFAM" id="SSF55347">
    <property type="entry name" value="Glyceraldehyde-3-phosphate dehydrogenase-like, C-terminal domain"/>
    <property type="match status" value="1"/>
</dbReference>
<dbReference type="SUPFAM" id="SSF51735">
    <property type="entry name" value="NAD(P)-binding Rossmann-fold domains"/>
    <property type="match status" value="1"/>
</dbReference>
<proteinExistence type="evidence at protein level"/>
<accession>P97324</accession>
<accession>Q0VB18</accession>
<feature type="initiator methionine" description="Removed" evidence="2">
    <location>
        <position position="1"/>
    </location>
</feature>
<feature type="chain" id="PRO_0000068086" description="Glucose-6-phosphate 1-dehydrogenase 2">
    <location>
        <begin position="2"/>
        <end position="513"/>
    </location>
</feature>
<feature type="active site" description="Proton acceptor" evidence="1">
    <location>
        <position position="263"/>
    </location>
</feature>
<feature type="binding site" evidence="2">
    <location>
        <begin position="38"/>
        <end position="45"/>
    </location>
    <ligand>
        <name>NADP(+)</name>
        <dbReference type="ChEBI" id="CHEBI:58349"/>
        <label>1</label>
    </ligand>
</feature>
<feature type="binding site" evidence="2">
    <location>
        <position position="72"/>
    </location>
    <ligand>
        <name>NADP(+)</name>
        <dbReference type="ChEBI" id="CHEBI:58349"/>
        <label>1</label>
    </ligand>
</feature>
<feature type="binding site" evidence="2">
    <location>
        <position position="147"/>
    </location>
    <ligand>
        <name>NADP(+)</name>
        <dbReference type="ChEBI" id="CHEBI:58349"/>
        <label>1</label>
    </ligand>
</feature>
<feature type="binding site" evidence="2">
    <location>
        <position position="171"/>
    </location>
    <ligand>
        <name>D-glucose 6-phosphate</name>
        <dbReference type="ChEBI" id="CHEBI:61548"/>
    </ligand>
</feature>
<feature type="binding site" evidence="2">
    <location>
        <position position="171"/>
    </location>
    <ligand>
        <name>NADP(+)</name>
        <dbReference type="ChEBI" id="CHEBI:58349"/>
        <label>1</label>
    </ligand>
</feature>
<feature type="binding site" evidence="2">
    <location>
        <begin position="201"/>
        <end position="205"/>
    </location>
    <ligand>
        <name>D-glucose 6-phosphate</name>
        <dbReference type="ChEBI" id="CHEBI:61548"/>
    </ligand>
</feature>
<feature type="binding site" evidence="2">
    <location>
        <position position="239"/>
    </location>
    <ligand>
        <name>D-glucose 6-phosphate</name>
        <dbReference type="ChEBI" id="CHEBI:61548"/>
    </ligand>
</feature>
<feature type="binding site" evidence="2">
    <location>
        <position position="258"/>
    </location>
    <ligand>
        <name>D-glucose 6-phosphate</name>
        <dbReference type="ChEBI" id="CHEBI:61548"/>
    </ligand>
</feature>
<feature type="binding site" evidence="2">
    <location>
        <position position="357"/>
    </location>
    <ligand>
        <name>NADP(+)</name>
        <dbReference type="ChEBI" id="CHEBI:58349"/>
        <label>2</label>
    </ligand>
</feature>
<feature type="binding site" evidence="2">
    <location>
        <position position="360"/>
    </location>
    <ligand>
        <name>D-glucose 6-phosphate</name>
        <dbReference type="ChEBI" id="CHEBI:61548"/>
    </ligand>
</feature>
<feature type="binding site" evidence="2">
    <location>
        <position position="365"/>
    </location>
    <ligand>
        <name>D-glucose 6-phosphate</name>
        <dbReference type="ChEBI" id="CHEBI:61548"/>
    </ligand>
</feature>
<feature type="binding site" evidence="2">
    <location>
        <position position="366"/>
    </location>
    <ligand>
        <name>NADP(+)</name>
        <dbReference type="ChEBI" id="CHEBI:58349"/>
        <label>2</label>
    </ligand>
</feature>
<feature type="binding site" evidence="2">
    <location>
        <position position="370"/>
    </location>
    <ligand>
        <name>NADP(+)</name>
        <dbReference type="ChEBI" id="CHEBI:58349"/>
        <label>2</label>
    </ligand>
</feature>
<feature type="binding site" evidence="2">
    <location>
        <position position="393"/>
    </location>
    <ligand>
        <name>NADP(+)</name>
        <dbReference type="ChEBI" id="CHEBI:58349"/>
        <label>2</label>
    </ligand>
</feature>
<feature type="binding site" evidence="2">
    <location>
        <position position="395"/>
    </location>
    <ligand>
        <name>D-glucose 6-phosphate</name>
        <dbReference type="ChEBI" id="CHEBI:61548"/>
    </ligand>
</feature>
<feature type="binding site" evidence="2">
    <location>
        <begin position="421"/>
        <end position="423"/>
    </location>
    <ligand>
        <name>NADP(+)</name>
        <dbReference type="ChEBI" id="CHEBI:58349"/>
        <label>2</label>
    </ligand>
</feature>
<feature type="binding site" evidence="2">
    <location>
        <position position="487"/>
    </location>
    <ligand>
        <name>NADP(+)</name>
        <dbReference type="ChEBI" id="CHEBI:58349"/>
        <label>2</label>
    </ligand>
</feature>
<feature type="binding site" evidence="2">
    <location>
        <position position="503"/>
    </location>
    <ligand>
        <name>NADP(+)</name>
        <dbReference type="ChEBI" id="CHEBI:58349"/>
        <label>2</label>
    </ligand>
</feature>
<feature type="modified residue" description="N-acetylalanine" evidence="2">
    <location>
        <position position="2"/>
    </location>
</feature>
<feature type="modified residue" description="Phosphoserine" evidence="2">
    <location>
        <position position="8"/>
    </location>
</feature>
<feature type="modified residue" description="Phosphothreonine" evidence="2">
    <location>
        <position position="10"/>
    </location>
</feature>
<feature type="modified residue" description="N6-acetyllysine" evidence="2">
    <location>
        <position position="89"/>
    </location>
</feature>
<feature type="modified residue" description="N6-(2-hydroxyisobutyryl)lysine; alternate" evidence="2">
    <location>
        <position position="171"/>
    </location>
</feature>
<feature type="modified residue" description="N6-acetyllysine; alternate" evidence="2">
    <location>
        <position position="171"/>
    </location>
</feature>
<feature type="modified residue" description="N6-acetyllysine" evidence="2">
    <location>
        <position position="432"/>
    </location>
</feature>
<feature type="modified residue" description="Phosphotyrosine" evidence="2">
    <location>
        <position position="503"/>
    </location>
</feature>
<sequence length="513" mass="59126">MAEQVTLSRTQVCGILREELYQNDAFHQADTHIFIIMGASGDLAKKKIYPTIWWLFRDGLLPKETFIVGYARSQLTVDDIQKQSEPFFKATPEERPKLEEFFTRNSYVVGQYDDPASYKHLNSYINALHQGMQANHLFYLALPPTVYEAVTKNIQETCMSQTGFNRIIVEKPFGRDLQSSNQLSNHISSLFREDQIYRIDHYLDKEMVQNLMVLRFANRIFGPIWNGDNIVCVILTFKEPFGTEGRGGYFDEFGIIRDVMQSHLLQMLCLVAMEKPATTDSDDVRNEKVKVLKCISEVETDNVILGQYVGNPNGEGEAANGYLDDPTVPRGSTTATFAAAVLYVKNERWDGVPFILRCGKALNERKAEVRLQFRDIPGDIFHQKCKRNELVIRMQPNEAVYTTMMTKKPGMFFNPEESELDLTYGNKYKNVKLPGAYERLILDVFCGCQMHFVRTDELREGWRIFTPLLHKIEREKPQPFPYVYGSRGPTEADELMRRVGFQYKGTYKGTHKH</sequence>
<reference key="1">
    <citation type="journal article" date="1997" name="Genomics">
        <title>Testis-specific expression of a functional retroposon encoding glucose-6-phosphate dehydrogenase in the mouse.</title>
        <authorList>
            <person name="Hendriksen P.J.M."/>
            <person name="Hoogerbrugge J.W."/>
            <person name="Baarends W.M."/>
            <person name="de Boer P."/>
            <person name="Vreeburg J.T.M."/>
            <person name="Vos E.A."/>
            <person name="van der Lende T."/>
            <person name="Grootegoed A.J."/>
        </authorList>
    </citation>
    <scope>NUCLEOTIDE SEQUENCE [GENOMIC DNA]</scope>
    <scope>FUNCTION</scope>
    <scope>CATALYTIC ACTIVITY</scope>
    <scope>PATHWAY</scope>
    <scope>SUBUNIT</scope>
    <scope>TISSUE SPECIFICITY</scope>
    <source>
        <strain>SWR/J</strain>
    </source>
</reference>
<reference key="2">
    <citation type="journal article" date="2004" name="Genome Res.">
        <title>The status, quality, and expansion of the NIH full-length cDNA project: the Mammalian Gene Collection (MGC).</title>
        <authorList>
            <consortium name="The MGC Project Team"/>
        </authorList>
    </citation>
    <scope>NUCLEOTIDE SEQUENCE [LARGE SCALE MRNA]</scope>
    <source>
        <tissue>Testis</tissue>
    </source>
</reference>
<reference key="3">
    <citation type="journal article" date="2010" name="Cell">
        <title>A tissue-specific atlas of mouse protein phosphorylation and expression.</title>
        <authorList>
            <person name="Huttlin E.L."/>
            <person name="Jedrychowski M.P."/>
            <person name="Elias J.E."/>
            <person name="Goswami T."/>
            <person name="Rad R."/>
            <person name="Beausoleil S.A."/>
            <person name="Villen J."/>
            <person name="Haas W."/>
            <person name="Sowa M.E."/>
            <person name="Gygi S.P."/>
        </authorList>
    </citation>
    <scope>IDENTIFICATION BY MASS SPECTROMETRY [LARGE SCALE ANALYSIS]</scope>
    <source>
        <tissue>Testis</tissue>
    </source>
</reference>
<keyword id="KW-0007">Acetylation</keyword>
<keyword id="KW-0119">Carbohydrate metabolism</keyword>
<keyword id="KW-0963">Cytoplasm</keyword>
<keyword id="KW-0313">Glucose metabolism</keyword>
<keyword id="KW-0379">Hydroxylation</keyword>
<keyword id="KW-0472">Membrane</keyword>
<keyword id="KW-0521">NADP</keyword>
<keyword id="KW-0560">Oxidoreductase</keyword>
<keyword id="KW-0597">Phosphoprotein</keyword>
<keyword id="KW-1185">Reference proteome</keyword>
<gene>
    <name type="primary">G6pd2</name>
    <name type="synonym">G6pd-2</name>
</gene>